<feature type="chain" id="PRO_0000232075" description="Phenylalanine--tRNA ligase beta subunit">
    <location>
        <begin position="1"/>
        <end position="824"/>
    </location>
</feature>
<feature type="domain" description="tRNA-binding" evidence="1">
    <location>
        <begin position="39"/>
        <end position="153"/>
    </location>
</feature>
<feature type="domain" description="B5" evidence="1">
    <location>
        <begin position="414"/>
        <end position="507"/>
    </location>
</feature>
<feature type="domain" description="FDX-ACB" evidence="1">
    <location>
        <begin position="730"/>
        <end position="823"/>
    </location>
</feature>
<feature type="binding site" evidence="1">
    <location>
        <position position="485"/>
    </location>
    <ligand>
        <name>Mg(2+)</name>
        <dbReference type="ChEBI" id="CHEBI:18420"/>
        <note>shared with alpha subunit</note>
    </ligand>
</feature>
<feature type="binding site" evidence="1">
    <location>
        <position position="491"/>
    </location>
    <ligand>
        <name>Mg(2+)</name>
        <dbReference type="ChEBI" id="CHEBI:18420"/>
        <note>shared with alpha subunit</note>
    </ligand>
</feature>
<feature type="binding site" evidence="1">
    <location>
        <position position="494"/>
    </location>
    <ligand>
        <name>Mg(2+)</name>
        <dbReference type="ChEBI" id="CHEBI:18420"/>
        <note>shared with alpha subunit</note>
    </ligand>
</feature>
<feature type="binding site" evidence="1">
    <location>
        <position position="495"/>
    </location>
    <ligand>
        <name>Mg(2+)</name>
        <dbReference type="ChEBI" id="CHEBI:18420"/>
        <note>shared with alpha subunit</note>
    </ligand>
</feature>
<evidence type="ECO:0000255" key="1">
    <source>
        <dbReference type="HAMAP-Rule" id="MF_00283"/>
    </source>
</evidence>
<reference key="1">
    <citation type="journal article" date="2007" name="PLoS Genet.">
        <title>Patterns and implications of gene gain and loss in the evolution of Prochlorococcus.</title>
        <authorList>
            <person name="Kettler G.C."/>
            <person name="Martiny A.C."/>
            <person name="Huang K."/>
            <person name="Zucker J."/>
            <person name="Coleman M.L."/>
            <person name="Rodrigue S."/>
            <person name="Chen F."/>
            <person name="Lapidus A."/>
            <person name="Ferriera S."/>
            <person name="Johnson J."/>
            <person name="Steglich C."/>
            <person name="Church G.M."/>
            <person name="Richardson P."/>
            <person name="Chisholm S.W."/>
        </authorList>
    </citation>
    <scope>NUCLEOTIDE SEQUENCE [LARGE SCALE GENOMIC DNA]</scope>
    <source>
        <strain>NATL2A</strain>
    </source>
</reference>
<organism>
    <name type="scientific">Prochlorococcus marinus (strain NATL2A)</name>
    <dbReference type="NCBI Taxonomy" id="59920"/>
    <lineage>
        <taxon>Bacteria</taxon>
        <taxon>Bacillati</taxon>
        <taxon>Cyanobacteriota</taxon>
        <taxon>Cyanophyceae</taxon>
        <taxon>Synechococcales</taxon>
        <taxon>Prochlorococcaceae</taxon>
        <taxon>Prochlorococcus</taxon>
    </lineage>
</organism>
<protein>
    <recommendedName>
        <fullName evidence="1">Phenylalanine--tRNA ligase beta subunit</fullName>
        <ecNumber evidence="1">6.1.1.20</ecNumber>
    </recommendedName>
    <alternativeName>
        <fullName evidence="1">Phenylalanyl-tRNA synthetase beta subunit</fullName>
        <shortName evidence="1">PheRS</shortName>
    </alternativeName>
</protein>
<name>SYFB_PROMT</name>
<dbReference type="EC" id="6.1.1.20" evidence="1"/>
<dbReference type="EMBL" id="CP000095">
    <property type="protein sequence ID" value="AAZ57830.1"/>
    <property type="molecule type" value="Genomic_DNA"/>
</dbReference>
<dbReference type="RefSeq" id="WP_011293872.1">
    <property type="nucleotide sequence ID" value="NC_007335.2"/>
</dbReference>
<dbReference type="SMR" id="Q46KZ8"/>
<dbReference type="STRING" id="59920.PMN2A_0338"/>
<dbReference type="KEGG" id="pmn:PMN2A_0338"/>
<dbReference type="HOGENOM" id="CLU_016891_0_0_3"/>
<dbReference type="OrthoDB" id="9805455at2"/>
<dbReference type="PhylomeDB" id="Q46KZ8"/>
<dbReference type="Proteomes" id="UP000002535">
    <property type="component" value="Chromosome"/>
</dbReference>
<dbReference type="GO" id="GO:0009328">
    <property type="term" value="C:phenylalanine-tRNA ligase complex"/>
    <property type="evidence" value="ECO:0007669"/>
    <property type="project" value="TreeGrafter"/>
</dbReference>
<dbReference type="GO" id="GO:0005524">
    <property type="term" value="F:ATP binding"/>
    <property type="evidence" value="ECO:0007669"/>
    <property type="project" value="UniProtKB-UniRule"/>
</dbReference>
<dbReference type="GO" id="GO:0000287">
    <property type="term" value="F:magnesium ion binding"/>
    <property type="evidence" value="ECO:0007669"/>
    <property type="project" value="UniProtKB-UniRule"/>
</dbReference>
<dbReference type="GO" id="GO:0004826">
    <property type="term" value="F:phenylalanine-tRNA ligase activity"/>
    <property type="evidence" value="ECO:0007669"/>
    <property type="project" value="UniProtKB-UniRule"/>
</dbReference>
<dbReference type="GO" id="GO:0000049">
    <property type="term" value="F:tRNA binding"/>
    <property type="evidence" value="ECO:0007669"/>
    <property type="project" value="UniProtKB-KW"/>
</dbReference>
<dbReference type="GO" id="GO:0006432">
    <property type="term" value="P:phenylalanyl-tRNA aminoacylation"/>
    <property type="evidence" value="ECO:0007669"/>
    <property type="project" value="UniProtKB-UniRule"/>
</dbReference>
<dbReference type="CDD" id="cd00769">
    <property type="entry name" value="PheRS_beta_core"/>
    <property type="match status" value="1"/>
</dbReference>
<dbReference type="CDD" id="cd02796">
    <property type="entry name" value="tRNA_bind_bactPheRS"/>
    <property type="match status" value="1"/>
</dbReference>
<dbReference type="FunFam" id="2.40.50.140:FF:000045">
    <property type="entry name" value="Phenylalanine--tRNA ligase beta subunit"/>
    <property type="match status" value="1"/>
</dbReference>
<dbReference type="Gene3D" id="3.30.56.10">
    <property type="match status" value="2"/>
</dbReference>
<dbReference type="Gene3D" id="3.30.930.10">
    <property type="entry name" value="Bira Bifunctional Protein, Domain 2"/>
    <property type="match status" value="1"/>
</dbReference>
<dbReference type="Gene3D" id="3.30.70.380">
    <property type="entry name" value="Ferrodoxin-fold anticodon-binding domain"/>
    <property type="match status" value="1"/>
</dbReference>
<dbReference type="Gene3D" id="2.40.50.140">
    <property type="entry name" value="Nucleic acid-binding proteins"/>
    <property type="match status" value="1"/>
</dbReference>
<dbReference type="Gene3D" id="3.50.40.10">
    <property type="entry name" value="Phenylalanyl-trna Synthetase, Chain B, domain 3"/>
    <property type="match status" value="1"/>
</dbReference>
<dbReference type="HAMAP" id="MF_00283">
    <property type="entry name" value="Phe_tRNA_synth_beta1"/>
    <property type="match status" value="1"/>
</dbReference>
<dbReference type="InterPro" id="IPR045864">
    <property type="entry name" value="aa-tRNA-synth_II/BPL/LPL"/>
</dbReference>
<dbReference type="InterPro" id="IPR005146">
    <property type="entry name" value="B3/B4_tRNA-bd"/>
</dbReference>
<dbReference type="InterPro" id="IPR009061">
    <property type="entry name" value="DNA-bd_dom_put_sf"/>
</dbReference>
<dbReference type="InterPro" id="IPR005121">
    <property type="entry name" value="Fdx_antiC-bd"/>
</dbReference>
<dbReference type="InterPro" id="IPR036690">
    <property type="entry name" value="Fdx_antiC-bd_sf"/>
</dbReference>
<dbReference type="InterPro" id="IPR012340">
    <property type="entry name" value="NA-bd_OB-fold"/>
</dbReference>
<dbReference type="InterPro" id="IPR045060">
    <property type="entry name" value="Phe-tRNA-ligase_IIc_bsu"/>
</dbReference>
<dbReference type="InterPro" id="IPR004532">
    <property type="entry name" value="Phe-tRNA-ligase_IIc_bsu_bact"/>
</dbReference>
<dbReference type="InterPro" id="IPR020825">
    <property type="entry name" value="Phe-tRNA_synthase-like_B3/B4"/>
</dbReference>
<dbReference type="InterPro" id="IPR041616">
    <property type="entry name" value="PheRS_beta_core"/>
</dbReference>
<dbReference type="InterPro" id="IPR002547">
    <property type="entry name" value="tRNA-bd_dom"/>
</dbReference>
<dbReference type="InterPro" id="IPR033714">
    <property type="entry name" value="tRNA_bind_bactPheRS"/>
</dbReference>
<dbReference type="InterPro" id="IPR005147">
    <property type="entry name" value="tRNA_synthase_B5-dom"/>
</dbReference>
<dbReference type="NCBIfam" id="TIGR00472">
    <property type="entry name" value="pheT_bact"/>
    <property type="match status" value="1"/>
</dbReference>
<dbReference type="NCBIfam" id="NF045760">
    <property type="entry name" value="YtpR"/>
    <property type="match status" value="1"/>
</dbReference>
<dbReference type="PANTHER" id="PTHR10947:SF0">
    <property type="entry name" value="PHENYLALANINE--TRNA LIGASE BETA SUBUNIT"/>
    <property type="match status" value="1"/>
</dbReference>
<dbReference type="PANTHER" id="PTHR10947">
    <property type="entry name" value="PHENYLALANYL-TRNA SYNTHETASE BETA CHAIN AND LEUCINE-RICH REPEAT-CONTAINING PROTEIN 47"/>
    <property type="match status" value="1"/>
</dbReference>
<dbReference type="Pfam" id="PF03483">
    <property type="entry name" value="B3_4"/>
    <property type="match status" value="1"/>
</dbReference>
<dbReference type="Pfam" id="PF03484">
    <property type="entry name" value="B5"/>
    <property type="match status" value="1"/>
</dbReference>
<dbReference type="Pfam" id="PF03147">
    <property type="entry name" value="FDX-ACB"/>
    <property type="match status" value="1"/>
</dbReference>
<dbReference type="Pfam" id="PF01588">
    <property type="entry name" value="tRNA_bind"/>
    <property type="match status" value="1"/>
</dbReference>
<dbReference type="Pfam" id="PF17759">
    <property type="entry name" value="tRNA_synthFbeta"/>
    <property type="match status" value="1"/>
</dbReference>
<dbReference type="SMART" id="SM00873">
    <property type="entry name" value="B3_4"/>
    <property type="match status" value="1"/>
</dbReference>
<dbReference type="SMART" id="SM00874">
    <property type="entry name" value="B5"/>
    <property type="match status" value="1"/>
</dbReference>
<dbReference type="SMART" id="SM00896">
    <property type="entry name" value="FDX-ACB"/>
    <property type="match status" value="1"/>
</dbReference>
<dbReference type="SUPFAM" id="SSF54991">
    <property type="entry name" value="Anticodon-binding domain of PheRS"/>
    <property type="match status" value="1"/>
</dbReference>
<dbReference type="SUPFAM" id="SSF55681">
    <property type="entry name" value="Class II aaRS and biotin synthetases"/>
    <property type="match status" value="1"/>
</dbReference>
<dbReference type="SUPFAM" id="SSF50249">
    <property type="entry name" value="Nucleic acid-binding proteins"/>
    <property type="match status" value="1"/>
</dbReference>
<dbReference type="SUPFAM" id="SSF56037">
    <property type="entry name" value="PheT/TilS domain"/>
    <property type="match status" value="1"/>
</dbReference>
<dbReference type="SUPFAM" id="SSF46955">
    <property type="entry name" value="Putative DNA-binding domain"/>
    <property type="match status" value="1"/>
</dbReference>
<dbReference type="PROSITE" id="PS51483">
    <property type="entry name" value="B5"/>
    <property type="match status" value="1"/>
</dbReference>
<dbReference type="PROSITE" id="PS51447">
    <property type="entry name" value="FDX_ACB"/>
    <property type="match status" value="1"/>
</dbReference>
<dbReference type="PROSITE" id="PS50886">
    <property type="entry name" value="TRBD"/>
    <property type="match status" value="1"/>
</dbReference>
<comment type="catalytic activity">
    <reaction evidence="1">
        <text>tRNA(Phe) + L-phenylalanine + ATP = L-phenylalanyl-tRNA(Phe) + AMP + diphosphate + H(+)</text>
        <dbReference type="Rhea" id="RHEA:19413"/>
        <dbReference type="Rhea" id="RHEA-COMP:9668"/>
        <dbReference type="Rhea" id="RHEA-COMP:9699"/>
        <dbReference type="ChEBI" id="CHEBI:15378"/>
        <dbReference type="ChEBI" id="CHEBI:30616"/>
        <dbReference type="ChEBI" id="CHEBI:33019"/>
        <dbReference type="ChEBI" id="CHEBI:58095"/>
        <dbReference type="ChEBI" id="CHEBI:78442"/>
        <dbReference type="ChEBI" id="CHEBI:78531"/>
        <dbReference type="ChEBI" id="CHEBI:456215"/>
        <dbReference type="EC" id="6.1.1.20"/>
    </reaction>
</comment>
<comment type="cofactor">
    <cofactor evidence="1">
        <name>Mg(2+)</name>
        <dbReference type="ChEBI" id="CHEBI:18420"/>
    </cofactor>
    <text evidence="1">Binds 2 magnesium ions per tetramer.</text>
</comment>
<comment type="subunit">
    <text evidence="1">Tetramer of two alpha and two beta subunits.</text>
</comment>
<comment type="subcellular location">
    <subcellularLocation>
        <location evidence="1">Cytoplasm</location>
    </subcellularLocation>
</comment>
<comment type="similarity">
    <text evidence="1">Belongs to the phenylalanyl-tRNA synthetase beta subunit family. Type 1 subfamily.</text>
</comment>
<keyword id="KW-0030">Aminoacyl-tRNA synthetase</keyword>
<keyword id="KW-0067">ATP-binding</keyword>
<keyword id="KW-0963">Cytoplasm</keyword>
<keyword id="KW-0436">Ligase</keyword>
<keyword id="KW-0460">Magnesium</keyword>
<keyword id="KW-0479">Metal-binding</keyword>
<keyword id="KW-0547">Nucleotide-binding</keyword>
<keyword id="KW-0648">Protein biosynthesis</keyword>
<keyword id="KW-1185">Reference proteome</keyword>
<keyword id="KW-0694">RNA-binding</keyword>
<keyword id="KW-0820">tRNA-binding</keyword>
<proteinExistence type="inferred from homology"/>
<sequence length="824" mass="92111">MKVSVSWLKDLVEFNNDIDELSEKLSMTGFEVESLEDLSEQAKNVVIGFVEEITPHPNAEKLKVCSVDVGLPKKLSIVCGAPNVKAGFHVLVAKVGAYLSSKSLKIKLSNLRGVESEGMICSLEELGIESSNEGIEILEENEANIPPIGSNAVDYLCLNDTIIELAITANRPDGMSMVGIAREISTITNSKLTLPNLNYIEDFNIFEPKICDKETIGVDCIYSITYIDSIDNTGKTNKNIFNKLSSLKQNCINPVVDITNYLMLEQGQPLHAFDADLLDNIIGRKVKPNDFGIRNGKQGELFVALDKKEYKINPTIKLITCDDIPIAIAGVIGGNNSSVSDKTTRIWLEAAVFTPTSIRNSSREIGLRTDASSRYEKGISSNMTTAVSKRASELISVQLGGDNISSYVNTDFKKKSISVNLRMDKINSVLGKLSSSDSNFVNNNSTKLRYLNEDEIETLLSKLGLILTSNDSGWNVQVPPYRSSDLTREIDLIEEIARLIGYDNFDSNMPDPLEPGVLSPTKLVERRLRNSFIHNGFQEVVTSSLVGPENTDDNAVLIKNPLLSETSRLRTNVWDEHLKILQRNVSFGAEGCWIFEIAKTYKKDKECFVETNLLSGALTGSKRLSKWGGASKQLSLDYFEARGKLKQSLDVLGVETIDKQLAEKDFMHPGRTSELFVEGKSIGFFGQIHPSQSEKFDLIKETYLFNLDFDSLIKAATRKTNWTRIYKDYPTVPYMERDIALIHSKKYSSLEIMGLIKKTGRPLLEKVELIDRYEGSSMPEDEISQAFRIRYRDAKKTLVEKDINPIHEKIRNALKEKIKAELRS</sequence>
<accession>Q46KZ8</accession>
<gene>
    <name evidence="1" type="primary">pheT</name>
    <name type="ordered locus">PMN2A_0338</name>
</gene>